<sequence>MAGHSKWKNIQRRKNAQDAKRGKLFMKLAKEIYVAAKTGGGDPASNPALRLVIEKAKAANMPNENIERAIKKATGTQEHTNYEEVRYEGYGPGGVAVMVVCLTDNKNRTASNVRVAFSKNGGNLGETGCVSYLFDRKGLLVIAREGLDIDEDDMLLQAIEAGAEEMETTEDSFEIYTTPEAFEEVKEQLEKNGFTFASAEITMIPQTYTTLAGDDLKKMLKLIDTLEDDDDVQEVYHNLDESVLEE</sequence>
<evidence type="ECO:0000255" key="1">
    <source>
        <dbReference type="HAMAP-Rule" id="MF_00693"/>
    </source>
</evidence>
<proteinExistence type="inferred from homology"/>
<protein>
    <recommendedName>
        <fullName evidence="1">Probable transcriptional regulatory protein GWCH70_2524</fullName>
    </recommendedName>
</protein>
<comment type="subcellular location">
    <subcellularLocation>
        <location evidence="1">Cytoplasm</location>
    </subcellularLocation>
</comment>
<comment type="similarity">
    <text evidence="1">Belongs to the TACO1 family.</text>
</comment>
<accession>C5D5F1</accession>
<reference key="1">
    <citation type="submission" date="2009-06" db="EMBL/GenBank/DDBJ databases">
        <title>Complete sequence of chromosome of Geopacillus sp. WCH70.</title>
        <authorList>
            <consortium name="US DOE Joint Genome Institute"/>
            <person name="Lucas S."/>
            <person name="Copeland A."/>
            <person name="Lapidus A."/>
            <person name="Glavina del Rio T."/>
            <person name="Dalin E."/>
            <person name="Tice H."/>
            <person name="Bruce D."/>
            <person name="Goodwin L."/>
            <person name="Pitluck S."/>
            <person name="Chertkov O."/>
            <person name="Brettin T."/>
            <person name="Detter J.C."/>
            <person name="Han C."/>
            <person name="Larimer F."/>
            <person name="Land M."/>
            <person name="Hauser L."/>
            <person name="Kyrpides N."/>
            <person name="Mikhailova N."/>
            <person name="Brumm P."/>
            <person name="Mead D.A."/>
            <person name="Richardson P."/>
        </authorList>
    </citation>
    <scope>NUCLEOTIDE SEQUENCE [LARGE SCALE GENOMIC DNA]</scope>
    <source>
        <strain>WCH70</strain>
    </source>
</reference>
<gene>
    <name type="ordered locus">GWCH70_2524</name>
</gene>
<keyword id="KW-0963">Cytoplasm</keyword>
<keyword id="KW-0238">DNA-binding</keyword>
<keyword id="KW-0804">Transcription</keyword>
<keyword id="KW-0805">Transcription regulation</keyword>
<organism>
    <name type="scientific">Geobacillus sp. (strain WCH70)</name>
    <dbReference type="NCBI Taxonomy" id="471223"/>
    <lineage>
        <taxon>Bacteria</taxon>
        <taxon>Bacillati</taxon>
        <taxon>Bacillota</taxon>
        <taxon>Bacilli</taxon>
        <taxon>Bacillales</taxon>
        <taxon>Anoxybacillaceae</taxon>
        <taxon>Geobacillus</taxon>
    </lineage>
</organism>
<feature type="chain" id="PRO_1000212612" description="Probable transcriptional regulatory protein GWCH70_2524">
    <location>
        <begin position="1"/>
        <end position="246"/>
    </location>
</feature>
<dbReference type="EMBL" id="CP001638">
    <property type="protein sequence ID" value="ACS25219.1"/>
    <property type="molecule type" value="Genomic_DNA"/>
</dbReference>
<dbReference type="SMR" id="C5D5F1"/>
<dbReference type="STRING" id="471223.GWCH70_2524"/>
<dbReference type="KEGG" id="gwc:GWCH70_2524"/>
<dbReference type="eggNOG" id="COG0217">
    <property type="taxonomic scope" value="Bacteria"/>
</dbReference>
<dbReference type="HOGENOM" id="CLU_062974_2_2_9"/>
<dbReference type="OrthoDB" id="9781053at2"/>
<dbReference type="GO" id="GO:0005829">
    <property type="term" value="C:cytosol"/>
    <property type="evidence" value="ECO:0007669"/>
    <property type="project" value="TreeGrafter"/>
</dbReference>
<dbReference type="GO" id="GO:0003677">
    <property type="term" value="F:DNA binding"/>
    <property type="evidence" value="ECO:0007669"/>
    <property type="project" value="UniProtKB-UniRule"/>
</dbReference>
<dbReference type="GO" id="GO:0006355">
    <property type="term" value="P:regulation of DNA-templated transcription"/>
    <property type="evidence" value="ECO:0007669"/>
    <property type="project" value="UniProtKB-UniRule"/>
</dbReference>
<dbReference type="FunFam" id="1.10.10.200:FF:000002">
    <property type="entry name" value="Probable transcriptional regulatory protein CLM62_37755"/>
    <property type="match status" value="1"/>
</dbReference>
<dbReference type="FunFam" id="3.30.70.980:FF:000002">
    <property type="entry name" value="Probable transcriptional regulatory protein YebC"/>
    <property type="match status" value="1"/>
</dbReference>
<dbReference type="Gene3D" id="1.10.10.200">
    <property type="match status" value="1"/>
</dbReference>
<dbReference type="Gene3D" id="3.30.70.980">
    <property type="match status" value="2"/>
</dbReference>
<dbReference type="HAMAP" id="MF_00693">
    <property type="entry name" value="Transcrip_reg_TACO1"/>
    <property type="match status" value="1"/>
</dbReference>
<dbReference type="InterPro" id="IPR017856">
    <property type="entry name" value="Integrase-like_N"/>
</dbReference>
<dbReference type="InterPro" id="IPR048300">
    <property type="entry name" value="TACO1_YebC-like_2nd/3rd_dom"/>
</dbReference>
<dbReference type="InterPro" id="IPR049083">
    <property type="entry name" value="TACO1_YebC_N"/>
</dbReference>
<dbReference type="InterPro" id="IPR002876">
    <property type="entry name" value="Transcrip_reg_TACO1-like"/>
</dbReference>
<dbReference type="InterPro" id="IPR026564">
    <property type="entry name" value="Transcrip_reg_TACO1-like_dom3"/>
</dbReference>
<dbReference type="InterPro" id="IPR029072">
    <property type="entry name" value="YebC-like"/>
</dbReference>
<dbReference type="NCBIfam" id="NF001030">
    <property type="entry name" value="PRK00110.1"/>
    <property type="match status" value="1"/>
</dbReference>
<dbReference type="NCBIfam" id="NF009044">
    <property type="entry name" value="PRK12378.1"/>
    <property type="match status" value="1"/>
</dbReference>
<dbReference type="NCBIfam" id="TIGR01033">
    <property type="entry name" value="YebC/PmpR family DNA-binding transcriptional regulator"/>
    <property type="match status" value="1"/>
</dbReference>
<dbReference type="PANTHER" id="PTHR12532:SF6">
    <property type="entry name" value="TRANSCRIPTIONAL REGULATORY PROTEIN YEBC-RELATED"/>
    <property type="match status" value="1"/>
</dbReference>
<dbReference type="PANTHER" id="PTHR12532">
    <property type="entry name" value="TRANSLATIONAL ACTIVATOR OF CYTOCHROME C OXIDASE 1"/>
    <property type="match status" value="1"/>
</dbReference>
<dbReference type="Pfam" id="PF20772">
    <property type="entry name" value="TACO1_YebC_N"/>
    <property type="match status" value="1"/>
</dbReference>
<dbReference type="Pfam" id="PF01709">
    <property type="entry name" value="Transcrip_reg"/>
    <property type="match status" value="1"/>
</dbReference>
<dbReference type="SUPFAM" id="SSF75625">
    <property type="entry name" value="YebC-like"/>
    <property type="match status" value="1"/>
</dbReference>
<name>Y2524_GEOSW</name>